<keyword id="KW-0963">Cytoplasm</keyword>
<keyword id="KW-0251">Elongation factor</keyword>
<keyword id="KW-0342">GTP-binding</keyword>
<keyword id="KW-0378">Hydrolase</keyword>
<keyword id="KW-0460">Magnesium</keyword>
<keyword id="KW-0479">Metal-binding</keyword>
<keyword id="KW-0547">Nucleotide-binding</keyword>
<keyword id="KW-0648">Protein biosynthesis</keyword>
<comment type="function">
    <text evidence="2">GTP hydrolase that promotes the GTP-dependent binding of aminoacyl-tRNA to the A-site of ribosomes during protein biosynthesis.</text>
</comment>
<comment type="catalytic activity">
    <reaction evidence="2">
        <text>GTP + H2O = GDP + phosphate + H(+)</text>
        <dbReference type="Rhea" id="RHEA:19669"/>
        <dbReference type="ChEBI" id="CHEBI:15377"/>
        <dbReference type="ChEBI" id="CHEBI:15378"/>
        <dbReference type="ChEBI" id="CHEBI:37565"/>
        <dbReference type="ChEBI" id="CHEBI:43474"/>
        <dbReference type="ChEBI" id="CHEBI:58189"/>
        <dbReference type="EC" id="3.6.5.3"/>
    </reaction>
    <physiologicalReaction direction="left-to-right" evidence="2">
        <dbReference type="Rhea" id="RHEA:19670"/>
    </physiologicalReaction>
</comment>
<comment type="subunit">
    <text evidence="2">Monomer.</text>
</comment>
<comment type="subcellular location">
    <subcellularLocation>
        <location evidence="2">Cytoplasm</location>
    </subcellularLocation>
</comment>
<comment type="similarity">
    <text evidence="2">Belongs to the TRAFAC class translation factor GTPase superfamily. Classic translation factor GTPase family. EF-Tu/EF-1A subfamily.</text>
</comment>
<feature type="chain" id="PRO_0000337467" description="Elongation factor Tu">
    <location>
        <begin position="1"/>
        <end position="394"/>
    </location>
</feature>
<feature type="domain" description="tr-type G">
    <location>
        <begin position="10"/>
        <end position="204"/>
    </location>
</feature>
<feature type="region of interest" description="G1" evidence="1">
    <location>
        <begin position="19"/>
        <end position="26"/>
    </location>
</feature>
<feature type="region of interest" description="G2" evidence="1">
    <location>
        <begin position="60"/>
        <end position="64"/>
    </location>
</feature>
<feature type="region of interest" description="G3" evidence="1">
    <location>
        <begin position="81"/>
        <end position="84"/>
    </location>
</feature>
<feature type="region of interest" description="G4" evidence="1">
    <location>
        <begin position="136"/>
        <end position="139"/>
    </location>
</feature>
<feature type="region of interest" description="G5" evidence="1">
    <location>
        <begin position="174"/>
        <end position="176"/>
    </location>
</feature>
<feature type="binding site" evidence="2">
    <location>
        <begin position="19"/>
        <end position="26"/>
    </location>
    <ligand>
        <name>GTP</name>
        <dbReference type="ChEBI" id="CHEBI:37565"/>
    </ligand>
</feature>
<feature type="binding site" evidence="2">
    <location>
        <position position="26"/>
    </location>
    <ligand>
        <name>Mg(2+)</name>
        <dbReference type="ChEBI" id="CHEBI:18420"/>
    </ligand>
</feature>
<feature type="binding site" evidence="2">
    <location>
        <begin position="81"/>
        <end position="85"/>
    </location>
    <ligand>
        <name>GTP</name>
        <dbReference type="ChEBI" id="CHEBI:37565"/>
    </ligand>
</feature>
<feature type="binding site" evidence="2">
    <location>
        <begin position="136"/>
        <end position="139"/>
    </location>
    <ligand>
        <name>GTP</name>
        <dbReference type="ChEBI" id="CHEBI:37565"/>
    </ligand>
</feature>
<reference key="1">
    <citation type="submission" date="2006-06" db="EMBL/GenBank/DDBJ databases">
        <title>Complete sequence of Pseudoalteromonas atlantica T6c.</title>
        <authorList>
            <consortium name="US DOE Joint Genome Institute"/>
            <person name="Copeland A."/>
            <person name="Lucas S."/>
            <person name="Lapidus A."/>
            <person name="Barry K."/>
            <person name="Detter J.C."/>
            <person name="Glavina del Rio T."/>
            <person name="Hammon N."/>
            <person name="Israni S."/>
            <person name="Dalin E."/>
            <person name="Tice H."/>
            <person name="Pitluck S."/>
            <person name="Saunders E."/>
            <person name="Brettin T."/>
            <person name="Bruce D."/>
            <person name="Han C."/>
            <person name="Tapia R."/>
            <person name="Gilna P."/>
            <person name="Schmutz J."/>
            <person name="Larimer F."/>
            <person name="Land M."/>
            <person name="Hauser L."/>
            <person name="Kyrpides N."/>
            <person name="Kim E."/>
            <person name="Karls A.C."/>
            <person name="Bartlett D."/>
            <person name="Higgins B.P."/>
            <person name="Richardson P."/>
        </authorList>
    </citation>
    <scope>NUCLEOTIDE SEQUENCE [LARGE SCALE GENOMIC DNA]</scope>
    <source>
        <strain>T6c / ATCC BAA-1087</strain>
    </source>
</reference>
<proteinExistence type="inferred from homology"/>
<organism>
    <name type="scientific">Pseudoalteromonas atlantica (strain T6c / ATCC BAA-1087)</name>
    <dbReference type="NCBI Taxonomy" id="3042615"/>
    <lineage>
        <taxon>Bacteria</taxon>
        <taxon>Pseudomonadati</taxon>
        <taxon>Pseudomonadota</taxon>
        <taxon>Gammaproteobacteria</taxon>
        <taxon>Alteromonadales</taxon>
        <taxon>Alteromonadaceae</taxon>
        <taxon>Paraglaciecola</taxon>
    </lineage>
</organism>
<accession>Q15NP2</accession>
<name>EFTU_PSEA6</name>
<protein>
    <recommendedName>
        <fullName evidence="2">Elongation factor Tu</fullName>
        <shortName evidence="2">EF-Tu</shortName>
        <ecNumber evidence="2">3.6.5.3</ecNumber>
    </recommendedName>
</protein>
<evidence type="ECO:0000250" key="1"/>
<evidence type="ECO:0000255" key="2">
    <source>
        <dbReference type="HAMAP-Rule" id="MF_00118"/>
    </source>
</evidence>
<sequence>MAKAKFERTKPHVNVGTIGHVDHGKTTLTAAITTVLAKTYGGAASAFDQIDNAPEERERGITISTSHVEYDTPTRHYAHVDCPGHADYVKNMITGAAQMDGAILVVAATDGPMPQTREHILLGRQVGVPFMVVFMNKCDMVDDEELLELVEMEVRELLSEYEFPGDDLPVIQGSALKALEGEEQWEAKIIELAEALDSYIPEPERDIDKPFLLPIEDVFSISGRGTVVTGRVERGIVNTGDAVEIVGMKDTTTSTVTGVEMFRKLLDEGRAGENIGALLRGTKREDVERGQVLAKPGSINPHTQFEAEVYVLSKDEGGRHTPFFKGYRPQFYFRTTDVTGAVELPEGVEMVMPGDNLKFVVELIAPIAMDEGLRFAIREGGRTVGAGVVAKIIA</sequence>
<gene>
    <name evidence="2" type="primary">tuf1</name>
    <name type="ordered locus">Patl_0603</name>
</gene>
<gene>
    <name evidence="2" type="primary">tuf2</name>
    <name type="ordered locus">Patl_3996</name>
</gene>
<dbReference type="EC" id="3.6.5.3" evidence="2"/>
<dbReference type="EMBL" id="CP000388">
    <property type="protein sequence ID" value="ABG39132.1"/>
    <property type="molecule type" value="Genomic_DNA"/>
</dbReference>
<dbReference type="EMBL" id="CP000388">
    <property type="protein sequence ID" value="ABG42496.1"/>
    <property type="molecule type" value="Genomic_DNA"/>
</dbReference>
<dbReference type="RefSeq" id="WP_011573501.1">
    <property type="nucleotide sequence ID" value="NC_008228.1"/>
</dbReference>
<dbReference type="SMR" id="Q15NP2"/>
<dbReference type="STRING" id="342610.Patl_0603"/>
<dbReference type="KEGG" id="pat:Patl_0603"/>
<dbReference type="KEGG" id="pat:Patl_3996"/>
<dbReference type="eggNOG" id="COG0050">
    <property type="taxonomic scope" value="Bacteria"/>
</dbReference>
<dbReference type="HOGENOM" id="CLU_007265_0_1_6"/>
<dbReference type="OrthoDB" id="9803139at2"/>
<dbReference type="Proteomes" id="UP000001981">
    <property type="component" value="Chromosome"/>
</dbReference>
<dbReference type="GO" id="GO:0005829">
    <property type="term" value="C:cytosol"/>
    <property type="evidence" value="ECO:0007669"/>
    <property type="project" value="TreeGrafter"/>
</dbReference>
<dbReference type="GO" id="GO:0005525">
    <property type="term" value="F:GTP binding"/>
    <property type="evidence" value="ECO:0007669"/>
    <property type="project" value="UniProtKB-UniRule"/>
</dbReference>
<dbReference type="GO" id="GO:0003924">
    <property type="term" value="F:GTPase activity"/>
    <property type="evidence" value="ECO:0007669"/>
    <property type="project" value="InterPro"/>
</dbReference>
<dbReference type="GO" id="GO:0097216">
    <property type="term" value="F:guanosine tetraphosphate binding"/>
    <property type="evidence" value="ECO:0007669"/>
    <property type="project" value="UniProtKB-ARBA"/>
</dbReference>
<dbReference type="GO" id="GO:0003746">
    <property type="term" value="F:translation elongation factor activity"/>
    <property type="evidence" value="ECO:0007669"/>
    <property type="project" value="UniProtKB-UniRule"/>
</dbReference>
<dbReference type="CDD" id="cd01884">
    <property type="entry name" value="EF_Tu"/>
    <property type="match status" value="1"/>
</dbReference>
<dbReference type="CDD" id="cd03697">
    <property type="entry name" value="EFTU_II"/>
    <property type="match status" value="1"/>
</dbReference>
<dbReference type="CDD" id="cd03707">
    <property type="entry name" value="EFTU_III"/>
    <property type="match status" value="1"/>
</dbReference>
<dbReference type="FunFam" id="2.40.30.10:FF:000001">
    <property type="entry name" value="Elongation factor Tu"/>
    <property type="match status" value="1"/>
</dbReference>
<dbReference type="FunFam" id="3.40.50.300:FF:000003">
    <property type="entry name" value="Elongation factor Tu"/>
    <property type="match status" value="1"/>
</dbReference>
<dbReference type="Gene3D" id="3.40.50.300">
    <property type="entry name" value="P-loop containing nucleotide triphosphate hydrolases"/>
    <property type="match status" value="1"/>
</dbReference>
<dbReference type="Gene3D" id="2.40.30.10">
    <property type="entry name" value="Translation factors"/>
    <property type="match status" value="2"/>
</dbReference>
<dbReference type="HAMAP" id="MF_00118_B">
    <property type="entry name" value="EF_Tu_B"/>
    <property type="match status" value="1"/>
</dbReference>
<dbReference type="InterPro" id="IPR041709">
    <property type="entry name" value="EF-Tu_GTP-bd"/>
</dbReference>
<dbReference type="InterPro" id="IPR050055">
    <property type="entry name" value="EF-Tu_GTPase"/>
</dbReference>
<dbReference type="InterPro" id="IPR004161">
    <property type="entry name" value="EFTu-like_2"/>
</dbReference>
<dbReference type="InterPro" id="IPR033720">
    <property type="entry name" value="EFTU_2"/>
</dbReference>
<dbReference type="InterPro" id="IPR031157">
    <property type="entry name" value="G_TR_CS"/>
</dbReference>
<dbReference type="InterPro" id="IPR027417">
    <property type="entry name" value="P-loop_NTPase"/>
</dbReference>
<dbReference type="InterPro" id="IPR005225">
    <property type="entry name" value="Small_GTP-bd"/>
</dbReference>
<dbReference type="InterPro" id="IPR000795">
    <property type="entry name" value="T_Tr_GTP-bd_dom"/>
</dbReference>
<dbReference type="InterPro" id="IPR009000">
    <property type="entry name" value="Transl_B-barrel_sf"/>
</dbReference>
<dbReference type="InterPro" id="IPR009001">
    <property type="entry name" value="Transl_elong_EF1A/Init_IF2_C"/>
</dbReference>
<dbReference type="InterPro" id="IPR004541">
    <property type="entry name" value="Transl_elong_EFTu/EF1A_bac/org"/>
</dbReference>
<dbReference type="InterPro" id="IPR004160">
    <property type="entry name" value="Transl_elong_EFTu/EF1A_C"/>
</dbReference>
<dbReference type="NCBIfam" id="TIGR00485">
    <property type="entry name" value="EF-Tu"/>
    <property type="match status" value="1"/>
</dbReference>
<dbReference type="NCBIfam" id="NF000766">
    <property type="entry name" value="PRK00049.1"/>
    <property type="match status" value="1"/>
</dbReference>
<dbReference type="NCBIfam" id="NF009372">
    <property type="entry name" value="PRK12735.1"/>
    <property type="match status" value="1"/>
</dbReference>
<dbReference type="NCBIfam" id="NF009373">
    <property type="entry name" value="PRK12736.1"/>
    <property type="match status" value="1"/>
</dbReference>
<dbReference type="NCBIfam" id="TIGR00231">
    <property type="entry name" value="small_GTP"/>
    <property type="match status" value="1"/>
</dbReference>
<dbReference type="PANTHER" id="PTHR43721:SF22">
    <property type="entry name" value="ELONGATION FACTOR TU, MITOCHONDRIAL"/>
    <property type="match status" value="1"/>
</dbReference>
<dbReference type="PANTHER" id="PTHR43721">
    <property type="entry name" value="ELONGATION FACTOR TU-RELATED"/>
    <property type="match status" value="1"/>
</dbReference>
<dbReference type="Pfam" id="PF00009">
    <property type="entry name" value="GTP_EFTU"/>
    <property type="match status" value="1"/>
</dbReference>
<dbReference type="Pfam" id="PF03144">
    <property type="entry name" value="GTP_EFTU_D2"/>
    <property type="match status" value="1"/>
</dbReference>
<dbReference type="Pfam" id="PF03143">
    <property type="entry name" value="GTP_EFTU_D3"/>
    <property type="match status" value="1"/>
</dbReference>
<dbReference type="PRINTS" id="PR00315">
    <property type="entry name" value="ELONGATNFCT"/>
</dbReference>
<dbReference type="SUPFAM" id="SSF50465">
    <property type="entry name" value="EF-Tu/eEF-1alpha/eIF2-gamma C-terminal domain"/>
    <property type="match status" value="1"/>
</dbReference>
<dbReference type="SUPFAM" id="SSF52540">
    <property type="entry name" value="P-loop containing nucleoside triphosphate hydrolases"/>
    <property type="match status" value="1"/>
</dbReference>
<dbReference type="SUPFAM" id="SSF50447">
    <property type="entry name" value="Translation proteins"/>
    <property type="match status" value="1"/>
</dbReference>
<dbReference type="PROSITE" id="PS00301">
    <property type="entry name" value="G_TR_1"/>
    <property type="match status" value="1"/>
</dbReference>
<dbReference type="PROSITE" id="PS51722">
    <property type="entry name" value="G_TR_2"/>
    <property type="match status" value="1"/>
</dbReference>